<evidence type="ECO:0000255" key="1">
    <source>
        <dbReference type="HAMAP-Rule" id="MF_00096"/>
    </source>
</evidence>
<evidence type="ECO:0000256" key="2">
    <source>
        <dbReference type="SAM" id="MobiDB-lite"/>
    </source>
</evidence>
<dbReference type="EMBL" id="CP001614">
    <property type="protein sequence ID" value="ACR11051.1"/>
    <property type="molecule type" value="Genomic_DNA"/>
</dbReference>
<dbReference type="RefSeq" id="WP_015817163.1">
    <property type="nucleotide sequence ID" value="NC_012997.1"/>
</dbReference>
<dbReference type="SMR" id="C5BMR5"/>
<dbReference type="STRING" id="377629.TERTU_2828"/>
<dbReference type="KEGG" id="ttu:TERTU_2828"/>
<dbReference type="eggNOG" id="COG0249">
    <property type="taxonomic scope" value="Bacteria"/>
</dbReference>
<dbReference type="HOGENOM" id="CLU_002472_4_0_6"/>
<dbReference type="OrthoDB" id="9802448at2"/>
<dbReference type="Proteomes" id="UP000009080">
    <property type="component" value="Chromosome"/>
</dbReference>
<dbReference type="GO" id="GO:0005829">
    <property type="term" value="C:cytosol"/>
    <property type="evidence" value="ECO:0007669"/>
    <property type="project" value="TreeGrafter"/>
</dbReference>
<dbReference type="GO" id="GO:0005524">
    <property type="term" value="F:ATP binding"/>
    <property type="evidence" value="ECO:0007669"/>
    <property type="project" value="UniProtKB-UniRule"/>
</dbReference>
<dbReference type="GO" id="GO:0140664">
    <property type="term" value="F:ATP-dependent DNA damage sensor activity"/>
    <property type="evidence" value="ECO:0007669"/>
    <property type="project" value="InterPro"/>
</dbReference>
<dbReference type="GO" id="GO:0003684">
    <property type="term" value="F:damaged DNA binding"/>
    <property type="evidence" value="ECO:0007669"/>
    <property type="project" value="UniProtKB-UniRule"/>
</dbReference>
<dbReference type="GO" id="GO:0030983">
    <property type="term" value="F:mismatched DNA binding"/>
    <property type="evidence" value="ECO:0007669"/>
    <property type="project" value="InterPro"/>
</dbReference>
<dbReference type="GO" id="GO:0006298">
    <property type="term" value="P:mismatch repair"/>
    <property type="evidence" value="ECO:0007669"/>
    <property type="project" value="UniProtKB-UniRule"/>
</dbReference>
<dbReference type="CDD" id="cd03284">
    <property type="entry name" value="ABC_MutS1"/>
    <property type="match status" value="1"/>
</dbReference>
<dbReference type="FunFam" id="1.10.1420.10:FF:000002">
    <property type="entry name" value="DNA mismatch repair protein MutS"/>
    <property type="match status" value="1"/>
</dbReference>
<dbReference type="FunFam" id="3.40.1170.10:FF:000001">
    <property type="entry name" value="DNA mismatch repair protein MutS"/>
    <property type="match status" value="1"/>
</dbReference>
<dbReference type="FunFam" id="3.40.50.300:FF:000283">
    <property type="entry name" value="DNA mismatch repair protein MutS"/>
    <property type="match status" value="1"/>
</dbReference>
<dbReference type="Gene3D" id="1.10.1420.10">
    <property type="match status" value="2"/>
</dbReference>
<dbReference type="Gene3D" id="6.10.140.430">
    <property type="match status" value="1"/>
</dbReference>
<dbReference type="Gene3D" id="3.40.1170.10">
    <property type="entry name" value="DNA repair protein MutS, domain I"/>
    <property type="match status" value="1"/>
</dbReference>
<dbReference type="Gene3D" id="3.30.420.110">
    <property type="entry name" value="MutS, connector domain"/>
    <property type="match status" value="1"/>
</dbReference>
<dbReference type="Gene3D" id="3.40.50.300">
    <property type="entry name" value="P-loop containing nucleotide triphosphate hydrolases"/>
    <property type="match status" value="1"/>
</dbReference>
<dbReference type="HAMAP" id="MF_00096">
    <property type="entry name" value="MutS"/>
    <property type="match status" value="1"/>
</dbReference>
<dbReference type="InterPro" id="IPR005748">
    <property type="entry name" value="DNA_mismatch_repair_MutS"/>
</dbReference>
<dbReference type="InterPro" id="IPR007695">
    <property type="entry name" value="DNA_mismatch_repair_MutS-lik_N"/>
</dbReference>
<dbReference type="InterPro" id="IPR017261">
    <property type="entry name" value="DNA_mismatch_repair_MutS/MSH"/>
</dbReference>
<dbReference type="InterPro" id="IPR000432">
    <property type="entry name" value="DNA_mismatch_repair_MutS_C"/>
</dbReference>
<dbReference type="InterPro" id="IPR007861">
    <property type="entry name" value="DNA_mismatch_repair_MutS_clamp"/>
</dbReference>
<dbReference type="InterPro" id="IPR007696">
    <property type="entry name" value="DNA_mismatch_repair_MutS_core"/>
</dbReference>
<dbReference type="InterPro" id="IPR016151">
    <property type="entry name" value="DNA_mismatch_repair_MutS_N"/>
</dbReference>
<dbReference type="InterPro" id="IPR036187">
    <property type="entry name" value="DNA_mismatch_repair_MutS_sf"/>
</dbReference>
<dbReference type="InterPro" id="IPR007860">
    <property type="entry name" value="DNA_mmatch_repair_MutS_con_dom"/>
</dbReference>
<dbReference type="InterPro" id="IPR045076">
    <property type="entry name" value="MutS"/>
</dbReference>
<dbReference type="InterPro" id="IPR036678">
    <property type="entry name" value="MutS_con_dom_sf"/>
</dbReference>
<dbReference type="InterPro" id="IPR027417">
    <property type="entry name" value="P-loop_NTPase"/>
</dbReference>
<dbReference type="NCBIfam" id="TIGR01070">
    <property type="entry name" value="mutS1"/>
    <property type="match status" value="1"/>
</dbReference>
<dbReference type="NCBIfam" id="NF003810">
    <property type="entry name" value="PRK05399.1"/>
    <property type="match status" value="1"/>
</dbReference>
<dbReference type="PANTHER" id="PTHR11361:SF34">
    <property type="entry name" value="DNA MISMATCH REPAIR PROTEIN MSH1, MITOCHONDRIAL"/>
    <property type="match status" value="1"/>
</dbReference>
<dbReference type="PANTHER" id="PTHR11361">
    <property type="entry name" value="DNA MISMATCH REPAIR PROTEIN MUTS FAMILY MEMBER"/>
    <property type="match status" value="1"/>
</dbReference>
<dbReference type="Pfam" id="PF01624">
    <property type="entry name" value="MutS_I"/>
    <property type="match status" value="1"/>
</dbReference>
<dbReference type="Pfam" id="PF05188">
    <property type="entry name" value="MutS_II"/>
    <property type="match status" value="1"/>
</dbReference>
<dbReference type="Pfam" id="PF05192">
    <property type="entry name" value="MutS_III"/>
    <property type="match status" value="1"/>
</dbReference>
<dbReference type="Pfam" id="PF05190">
    <property type="entry name" value="MutS_IV"/>
    <property type="match status" value="1"/>
</dbReference>
<dbReference type="Pfam" id="PF00488">
    <property type="entry name" value="MutS_V"/>
    <property type="match status" value="1"/>
</dbReference>
<dbReference type="PIRSF" id="PIRSF037677">
    <property type="entry name" value="DNA_mis_repair_Msh6"/>
    <property type="match status" value="1"/>
</dbReference>
<dbReference type="SMART" id="SM00534">
    <property type="entry name" value="MUTSac"/>
    <property type="match status" value="1"/>
</dbReference>
<dbReference type="SMART" id="SM00533">
    <property type="entry name" value="MUTSd"/>
    <property type="match status" value="1"/>
</dbReference>
<dbReference type="SUPFAM" id="SSF55271">
    <property type="entry name" value="DNA repair protein MutS, domain I"/>
    <property type="match status" value="1"/>
</dbReference>
<dbReference type="SUPFAM" id="SSF53150">
    <property type="entry name" value="DNA repair protein MutS, domain II"/>
    <property type="match status" value="1"/>
</dbReference>
<dbReference type="SUPFAM" id="SSF48334">
    <property type="entry name" value="DNA repair protein MutS, domain III"/>
    <property type="match status" value="1"/>
</dbReference>
<dbReference type="SUPFAM" id="SSF52540">
    <property type="entry name" value="P-loop containing nucleoside triphosphate hydrolases"/>
    <property type="match status" value="1"/>
</dbReference>
<dbReference type="PROSITE" id="PS00486">
    <property type="entry name" value="DNA_MISMATCH_REPAIR_2"/>
    <property type="match status" value="1"/>
</dbReference>
<name>MUTS_TERTT</name>
<feature type="chain" id="PRO_1000202745" description="DNA mismatch repair protein MutS">
    <location>
        <begin position="1"/>
        <end position="864"/>
    </location>
</feature>
<feature type="region of interest" description="Disordered" evidence="2">
    <location>
        <begin position="804"/>
        <end position="833"/>
    </location>
</feature>
<feature type="binding site" evidence="1">
    <location>
        <begin position="621"/>
        <end position="628"/>
    </location>
    <ligand>
        <name>ATP</name>
        <dbReference type="ChEBI" id="CHEBI:30616"/>
    </ligand>
</feature>
<organism>
    <name type="scientific">Teredinibacter turnerae (strain ATCC 39867 / T7901)</name>
    <dbReference type="NCBI Taxonomy" id="377629"/>
    <lineage>
        <taxon>Bacteria</taxon>
        <taxon>Pseudomonadati</taxon>
        <taxon>Pseudomonadota</taxon>
        <taxon>Gammaproteobacteria</taxon>
        <taxon>Cellvibrionales</taxon>
        <taxon>Cellvibrionaceae</taxon>
        <taxon>Teredinibacter</taxon>
    </lineage>
</organism>
<gene>
    <name evidence="1" type="primary">mutS</name>
    <name type="ordered locus">TERTU_2828</name>
</gene>
<proteinExistence type="inferred from homology"/>
<keyword id="KW-0067">ATP-binding</keyword>
<keyword id="KW-0227">DNA damage</keyword>
<keyword id="KW-0234">DNA repair</keyword>
<keyword id="KW-0238">DNA-binding</keyword>
<keyword id="KW-0547">Nucleotide-binding</keyword>
<keyword id="KW-1185">Reference proteome</keyword>
<reference key="1">
    <citation type="journal article" date="2009" name="PLoS ONE">
        <title>The complete genome of Teredinibacter turnerae T7901: an intracellular endosymbiont of marine wood-boring bivalves (shipworms).</title>
        <authorList>
            <person name="Yang J.C."/>
            <person name="Madupu R."/>
            <person name="Durkin A.S."/>
            <person name="Ekborg N.A."/>
            <person name="Pedamallu C.S."/>
            <person name="Hostetler J.B."/>
            <person name="Radune D."/>
            <person name="Toms B.S."/>
            <person name="Henrissat B."/>
            <person name="Coutinho P.M."/>
            <person name="Schwarz S."/>
            <person name="Field L."/>
            <person name="Trindade-Silva A.E."/>
            <person name="Soares C.A.G."/>
            <person name="Elshahawi S."/>
            <person name="Hanora A."/>
            <person name="Schmidt E.W."/>
            <person name="Haygood M.G."/>
            <person name="Posfai J."/>
            <person name="Benner J."/>
            <person name="Madinger C."/>
            <person name="Nove J."/>
            <person name="Anton B."/>
            <person name="Chaudhary K."/>
            <person name="Foster J."/>
            <person name="Holman A."/>
            <person name="Kumar S."/>
            <person name="Lessard P.A."/>
            <person name="Luyten Y.A."/>
            <person name="Slatko B."/>
            <person name="Wood N."/>
            <person name="Wu B."/>
            <person name="Teplitski M."/>
            <person name="Mougous J.D."/>
            <person name="Ward N."/>
            <person name="Eisen J.A."/>
            <person name="Badger J.H."/>
            <person name="Distel D.L."/>
        </authorList>
    </citation>
    <scope>NUCLEOTIDE SEQUENCE [LARGE SCALE GENOMIC DNA]</scope>
    <source>
        <strain>ATCC 39867 / T7901</strain>
    </source>
</reference>
<protein>
    <recommendedName>
        <fullName evidence="1">DNA mismatch repair protein MutS</fullName>
    </recommendedName>
</protein>
<comment type="function">
    <text evidence="1">This protein is involved in the repair of mismatches in DNA. It is possible that it carries out the mismatch recognition step. This protein has a weak ATPase activity.</text>
</comment>
<comment type="similarity">
    <text evidence="1">Belongs to the DNA mismatch repair MutS family.</text>
</comment>
<accession>C5BMR5</accession>
<sequence>MNQEVKQSEVNLEQHTPMMQQYLRIKAQHPNELVFYRMGDFYELFYEDARKAAKLLDVTLTARGKSNGEPIPMAGVPYHAAENYLAKLVKLGVSVAICEQIGDPATTKGPVERKVMRVVTPGTVSDEALLDEHRDNWLVAISAHESQFGIACLDMGSGRFSVFEIEGEDALISEIERLRPAEILAPDLLTLPPGVRNKAGYRGRPEWEFDIESGLRSLCAHFATKDLDGFGCRGLTVALGAAGCLYAYAKETQRTELSHIASLVVENPDNTVSLDAATRRNLELDINLNGSEENTLFSVLNTTATAMGGRLLRRWINTPLRDLHTLHSRQSAIAALLENYRFEQVQQELKHIGDLERILGRIALRSARPRDLTRLLNSLAIYPQLQPLLKSAECETLATLASEINEFPGLVQELDKALVENPPVVIREGGVIAEGYDEELDELRGISTNAGEFLVKLETQERERTGLNTLKVGYNRVHGYFIEISKSQAEKAPAEYIRRQTLKNAERFITPELKTFEDKALSAKSRALSREKALYEQLIEKLNEHLRELQISAVAVAELDVLNTFAERAHALKLVKPEFRGEAGIEIEKGRHPVVEQVLTDPFIPNDLTLNAQQRMLIITGPNMGGKSTYMRQTALIVLLAQVGSYVPAEACRLGLVDRIFTRIGSSDDLAGGRSTFMVEMTETANILNNATSDSLVLMDEIGRGTSTYDGLSLAWACVEHLAEKLKSFTLFATHYFEITALPAQLPTVKNVHLDATEYQDNIVFLHNIQAGPASKSYGLQVAKLAGIPGAVLRQAKDVLHKLETGKPESPAPVASRSSKPSMQADMFAEPQPSKVEKRLATVIPDDLSPRQALELVYELKKLI</sequence>